<comment type="function">
    <text evidence="1">Catalyzes the irreversible cleavage of the glycosidic bond in both 5'-methylthioadenosine (MTA) and S-adenosylhomocysteine (SAH/AdoHcy) to adenine and the corresponding thioribose, 5'-methylthioribose and S-ribosylhomocysteine, respectively. Also cleaves 5'-deoxyadenosine, a toxic by-product of radical S-adenosylmethionine (SAM) enzymes, into 5-deoxyribose and adenine.</text>
</comment>
<comment type="catalytic activity">
    <reaction evidence="1">
        <text>S-adenosyl-L-homocysteine + H2O = S-(5-deoxy-D-ribos-5-yl)-L-homocysteine + adenine</text>
        <dbReference type="Rhea" id="RHEA:17805"/>
        <dbReference type="ChEBI" id="CHEBI:15377"/>
        <dbReference type="ChEBI" id="CHEBI:16708"/>
        <dbReference type="ChEBI" id="CHEBI:57856"/>
        <dbReference type="ChEBI" id="CHEBI:58195"/>
        <dbReference type="EC" id="3.2.2.9"/>
    </reaction>
</comment>
<comment type="catalytic activity">
    <reaction evidence="1">
        <text>S-methyl-5'-thioadenosine + H2O = 5-(methylsulfanyl)-D-ribose + adenine</text>
        <dbReference type="Rhea" id="RHEA:13617"/>
        <dbReference type="ChEBI" id="CHEBI:15377"/>
        <dbReference type="ChEBI" id="CHEBI:16708"/>
        <dbReference type="ChEBI" id="CHEBI:17509"/>
        <dbReference type="ChEBI" id="CHEBI:78440"/>
        <dbReference type="EC" id="3.2.2.9"/>
    </reaction>
</comment>
<comment type="catalytic activity">
    <reaction evidence="1">
        <text>5'-deoxyadenosine + H2O = 5-deoxy-D-ribose + adenine</text>
        <dbReference type="Rhea" id="RHEA:29859"/>
        <dbReference type="ChEBI" id="CHEBI:15377"/>
        <dbReference type="ChEBI" id="CHEBI:16708"/>
        <dbReference type="ChEBI" id="CHEBI:17319"/>
        <dbReference type="ChEBI" id="CHEBI:149540"/>
        <dbReference type="EC" id="3.2.2.9"/>
    </reaction>
    <physiologicalReaction direction="left-to-right" evidence="1">
        <dbReference type="Rhea" id="RHEA:29860"/>
    </physiologicalReaction>
</comment>
<comment type="pathway">
    <text evidence="1">Amino-acid biosynthesis; L-methionine biosynthesis via salvage pathway; S-methyl-5-thio-alpha-D-ribose 1-phosphate from S-methyl-5'-thioadenosine (hydrolase route): step 1/2.</text>
</comment>
<comment type="similarity">
    <text evidence="1">Belongs to the PNP/UDP phosphorylase family. MtnN subfamily.</text>
</comment>
<reference key="1">
    <citation type="submission" date="2006-08" db="EMBL/GenBank/DDBJ databases">
        <title>Complete sequence of Shewanella frigidimarina NCIMB 400.</title>
        <authorList>
            <consortium name="US DOE Joint Genome Institute"/>
            <person name="Copeland A."/>
            <person name="Lucas S."/>
            <person name="Lapidus A."/>
            <person name="Barry K."/>
            <person name="Detter J.C."/>
            <person name="Glavina del Rio T."/>
            <person name="Hammon N."/>
            <person name="Israni S."/>
            <person name="Dalin E."/>
            <person name="Tice H."/>
            <person name="Pitluck S."/>
            <person name="Fredrickson J.K."/>
            <person name="Kolker E."/>
            <person name="McCuel L.A."/>
            <person name="DiChristina T."/>
            <person name="Nealson K.H."/>
            <person name="Newman D."/>
            <person name="Tiedje J.M."/>
            <person name="Zhou J."/>
            <person name="Romine M.F."/>
            <person name="Culley D.E."/>
            <person name="Serres M."/>
            <person name="Chertkov O."/>
            <person name="Brettin T."/>
            <person name="Bruce D."/>
            <person name="Han C."/>
            <person name="Tapia R."/>
            <person name="Gilna P."/>
            <person name="Schmutz J."/>
            <person name="Larimer F."/>
            <person name="Land M."/>
            <person name="Hauser L."/>
            <person name="Kyrpides N."/>
            <person name="Mikhailova N."/>
            <person name="Richardson P."/>
        </authorList>
    </citation>
    <scope>NUCLEOTIDE SEQUENCE [LARGE SCALE GENOMIC DNA]</scope>
    <source>
        <strain>NCIMB 400</strain>
    </source>
</reference>
<protein>
    <recommendedName>
        <fullName evidence="1">5'-methylthioadenosine/S-adenosylhomocysteine nucleosidase</fullName>
        <shortName evidence="1">MTA/SAH nucleosidase</shortName>
        <shortName evidence="1">MTAN</shortName>
        <ecNumber evidence="1">3.2.2.9</ecNumber>
    </recommendedName>
    <alternativeName>
        <fullName evidence="1">5'-deoxyadenosine nucleosidase</fullName>
        <shortName evidence="1">DOA nucleosidase</shortName>
        <shortName evidence="1">dAdo nucleosidase</shortName>
    </alternativeName>
    <alternativeName>
        <fullName evidence="1">5'-methylthioadenosine nucleosidase</fullName>
        <shortName evidence="1">MTA nucleosidase</shortName>
    </alternativeName>
    <alternativeName>
        <fullName evidence="1">S-adenosylhomocysteine nucleosidase</fullName>
        <shortName evidence="1">AdoHcy nucleosidase</shortName>
        <shortName evidence="1">SAH nucleosidase</shortName>
        <shortName evidence="1">SRH nucleosidase</shortName>
    </alternativeName>
</protein>
<gene>
    <name evidence="1" type="primary">mtnN</name>
    <name type="ordered locus">Sfri_2966</name>
</gene>
<accession>Q07YV9</accession>
<evidence type="ECO:0000255" key="1">
    <source>
        <dbReference type="HAMAP-Rule" id="MF_01684"/>
    </source>
</evidence>
<name>MTNN_SHEFN</name>
<keyword id="KW-0028">Amino-acid biosynthesis</keyword>
<keyword id="KW-0378">Hydrolase</keyword>
<keyword id="KW-0486">Methionine biosynthesis</keyword>
<keyword id="KW-1185">Reference proteome</keyword>
<organism>
    <name type="scientific">Shewanella frigidimarina (strain NCIMB 400)</name>
    <dbReference type="NCBI Taxonomy" id="318167"/>
    <lineage>
        <taxon>Bacteria</taxon>
        <taxon>Pseudomonadati</taxon>
        <taxon>Pseudomonadota</taxon>
        <taxon>Gammaproteobacteria</taxon>
        <taxon>Alteromonadales</taxon>
        <taxon>Shewanellaceae</taxon>
        <taxon>Shewanella</taxon>
    </lineage>
</organism>
<proteinExistence type="inferred from homology"/>
<sequence length="230" mass="24186">MKIGIIGAMEPEVVHLVQAIVDPVHTTIAGIEFISGSIAGKDVVVTRSGIGKVAASIATTLLIEKFAATHVINTGSAGGFVDSLAIGDIVISSEVRHHDVDVTAFGYEIGQMAQQPAAFMPDSTLVNAAKSAVAELGEVKAIEGLICTGDSFICDPVRTKVMRENFPTMAACEMEGAAIAQVCHQFNVPFVVIRSLSDNANNDSPVDFDSYIIKAGMHSAMMVIALLQQL</sequence>
<dbReference type="EC" id="3.2.2.9" evidence="1"/>
<dbReference type="EMBL" id="CP000447">
    <property type="protein sequence ID" value="ABI72805.1"/>
    <property type="molecule type" value="Genomic_DNA"/>
</dbReference>
<dbReference type="RefSeq" id="WP_011638414.1">
    <property type="nucleotide sequence ID" value="NC_008345.1"/>
</dbReference>
<dbReference type="SMR" id="Q07YV9"/>
<dbReference type="STRING" id="318167.Sfri_2966"/>
<dbReference type="KEGG" id="sfr:Sfri_2966"/>
<dbReference type="eggNOG" id="COG0775">
    <property type="taxonomic scope" value="Bacteria"/>
</dbReference>
<dbReference type="HOGENOM" id="CLU_031248_2_0_6"/>
<dbReference type="OrthoDB" id="9792278at2"/>
<dbReference type="UniPathway" id="UPA00904">
    <property type="reaction ID" value="UER00871"/>
</dbReference>
<dbReference type="Proteomes" id="UP000000684">
    <property type="component" value="Chromosome"/>
</dbReference>
<dbReference type="GO" id="GO:0005829">
    <property type="term" value="C:cytosol"/>
    <property type="evidence" value="ECO:0007669"/>
    <property type="project" value="TreeGrafter"/>
</dbReference>
<dbReference type="GO" id="GO:0008782">
    <property type="term" value="F:adenosylhomocysteine nucleosidase activity"/>
    <property type="evidence" value="ECO:0007669"/>
    <property type="project" value="UniProtKB-UniRule"/>
</dbReference>
<dbReference type="GO" id="GO:0008930">
    <property type="term" value="F:methylthioadenosine nucleosidase activity"/>
    <property type="evidence" value="ECO:0007669"/>
    <property type="project" value="UniProtKB-UniRule"/>
</dbReference>
<dbReference type="GO" id="GO:0019509">
    <property type="term" value="P:L-methionine salvage from methylthioadenosine"/>
    <property type="evidence" value="ECO:0007669"/>
    <property type="project" value="UniProtKB-UniRule"/>
</dbReference>
<dbReference type="GO" id="GO:0019284">
    <property type="term" value="P:L-methionine salvage from S-adenosylmethionine"/>
    <property type="evidence" value="ECO:0007669"/>
    <property type="project" value="TreeGrafter"/>
</dbReference>
<dbReference type="GO" id="GO:0009164">
    <property type="term" value="P:nucleoside catabolic process"/>
    <property type="evidence" value="ECO:0007669"/>
    <property type="project" value="InterPro"/>
</dbReference>
<dbReference type="CDD" id="cd09008">
    <property type="entry name" value="MTAN"/>
    <property type="match status" value="1"/>
</dbReference>
<dbReference type="FunFam" id="3.40.50.1580:FF:000001">
    <property type="entry name" value="MTA/SAH nucleosidase family protein"/>
    <property type="match status" value="1"/>
</dbReference>
<dbReference type="Gene3D" id="3.40.50.1580">
    <property type="entry name" value="Nucleoside phosphorylase domain"/>
    <property type="match status" value="1"/>
</dbReference>
<dbReference type="HAMAP" id="MF_01684">
    <property type="entry name" value="Salvage_MtnN"/>
    <property type="match status" value="1"/>
</dbReference>
<dbReference type="InterPro" id="IPR010049">
    <property type="entry name" value="MTA_SAH_Nsdase"/>
</dbReference>
<dbReference type="InterPro" id="IPR000845">
    <property type="entry name" value="Nucleoside_phosphorylase_d"/>
</dbReference>
<dbReference type="InterPro" id="IPR035994">
    <property type="entry name" value="Nucleoside_phosphorylase_sf"/>
</dbReference>
<dbReference type="NCBIfam" id="TIGR01704">
    <property type="entry name" value="MTA_SAH-Nsdase"/>
    <property type="match status" value="1"/>
</dbReference>
<dbReference type="NCBIfam" id="NF004079">
    <property type="entry name" value="PRK05584.1"/>
    <property type="match status" value="1"/>
</dbReference>
<dbReference type="PANTHER" id="PTHR46832">
    <property type="entry name" value="5'-METHYLTHIOADENOSINE/S-ADENOSYLHOMOCYSTEINE NUCLEOSIDASE"/>
    <property type="match status" value="1"/>
</dbReference>
<dbReference type="PANTHER" id="PTHR46832:SF1">
    <property type="entry name" value="5'-METHYLTHIOADENOSINE_S-ADENOSYLHOMOCYSTEINE NUCLEOSIDASE"/>
    <property type="match status" value="1"/>
</dbReference>
<dbReference type="Pfam" id="PF01048">
    <property type="entry name" value="PNP_UDP_1"/>
    <property type="match status" value="1"/>
</dbReference>
<dbReference type="SUPFAM" id="SSF53167">
    <property type="entry name" value="Purine and uridine phosphorylases"/>
    <property type="match status" value="1"/>
</dbReference>
<feature type="chain" id="PRO_0000359344" description="5'-methylthioadenosine/S-adenosylhomocysteine nucleosidase">
    <location>
        <begin position="1"/>
        <end position="230"/>
    </location>
</feature>
<feature type="active site" description="Proton acceptor" evidence="1">
    <location>
        <position position="12"/>
    </location>
</feature>
<feature type="active site" description="Proton donor" evidence="1">
    <location>
        <position position="198"/>
    </location>
</feature>
<feature type="binding site" evidence="1">
    <location>
        <position position="78"/>
    </location>
    <ligand>
        <name>substrate</name>
    </ligand>
</feature>
<feature type="binding site" evidence="1">
    <location>
        <position position="153"/>
    </location>
    <ligand>
        <name>substrate</name>
    </ligand>
</feature>
<feature type="binding site" evidence="1">
    <location>
        <begin position="174"/>
        <end position="175"/>
    </location>
    <ligand>
        <name>substrate</name>
    </ligand>
</feature>